<gene>
    <name evidence="27" type="primary">AHA2</name>
    <name evidence="34" type="ordered locus">At4g30190</name>
    <name evidence="35" type="ORF">F9N11.40</name>
</gene>
<proteinExistence type="evidence at protein level"/>
<organism>
    <name type="scientific">Arabidopsis thaliana</name>
    <name type="common">Mouse-ear cress</name>
    <dbReference type="NCBI Taxonomy" id="3702"/>
    <lineage>
        <taxon>Eukaryota</taxon>
        <taxon>Viridiplantae</taxon>
        <taxon>Streptophyta</taxon>
        <taxon>Embryophyta</taxon>
        <taxon>Tracheophyta</taxon>
        <taxon>Spermatophyta</taxon>
        <taxon>Magnoliopsida</taxon>
        <taxon>eudicotyledons</taxon>
        <taxon>Gunneridae</taxon>
        <taxon>Pentapetalae</taxon>
        <taxon>rosids</taxon>
        <taxon>malvids</taxon>
        <taxon>Brassicales</taxon>
        <taxon>Brassicaceae</taxon>
        <taxon>Camelineae</taxon>
        <taxon>Arabidopsis</taxon>
    </lineage>
</organism>
<dbReference type="EC" id="7.1.2.1" evidence="30"/>
<dbReference type="EMBL" id="J05570">
    <property type="protein sequence ID" value="AAA32751.1"/>
    <property type="molecule type" value="Genomic_DNA"/>
</dbReference>
<dbReference type="EMBL" id="AL109796">
    <property type="protein sequence ID" value="CAB52463.1"/>
    <property type="molecule type" value="Genomic_DNA"/>
</dbReference>
<dbReference type="EMBL" id="AL161576">
    <property type="protein sequence ID" value="CAB81012.1"/>
    <property type="molecule type" value="Genomic_DNA"/>
</dbReference>
<dbReference type="EMBL" id="CP002687">
    <property type="protein sequence ID" value="AEE85731.1"/>
    <property type="molecule type" value="Genomic_DNA"/>
</dbReference>
<dbReference type="EMBL" id="AY035075">
    <property type="protein sequence ID" value="AAK59580.1"/>
    <property type="molecule type" value="mRNA"/>
</dbReference>
<dbReference type="EMBL" id="BT000781">
    <property type="protein sequence ID" value="AAN31920.1"/>
    <property type="molecule type" value="mRNA"/>
</dbReference>
<dbReference type="EMBL" id="BT001969">
    <property type="protein sequence ID" value="AAN71968.1"/>
    <property type="molecule type" value="mRNA"/>
</dbReference>
<dbReference type="PIR" id="A37116">
    <property type="entry name" value="PXMUP2"/>
</dbReference>
<dbReference type="RefSeq" id="NP_194748.1">
    <molecule id="P19456-1"/>
    <property type="nucleotide sequence ID" value="NM_119165.4"/>
</dbReference>
<dbReference type="PDB" id="5KSD">
    <property type="method" value="X-ray"/>
    <property type="resolution" value="3.50 A"/>
    <property type="chains" value="A/B=12-844"/>
</dbReference>
<dbReference type="PDBsum" id="5KSD"/>
<dbReference type="SMR" id="P19456"/>
<dbReference type="BioGRID" id="14429">
    <property type="interactions" value="49"/>
</dbReference>
<dbReference type="FunCoup" id="P19456">
    <property type="interactions" value="770"/>
</dbReference>
<dbReference type="IntAct" id="P19456">
    <property type="interactions" value="30"/>
</dbReference>
<dbReference type="STRING" id="3702.P19456"/>
<dbReference type="TCDB" id="3.A.3.3.9">
    <property type="family name" value="the p-type atpase (p-atpase) superfamily"/>
</dbReference>
<dbReference type="GlyGen" id="P19456">
    <property type="glycosylation" value="1 site"/>
</dbReference>
<dbReference type="iPTMnet" id="P19456"/>
<dbReference type="PaxDb" id="3702-AT4G30190.2"/>
<dbReference type="ProteomicsDB" id="236644">
    <molecule id="P19456-1"/>
</dbReference>
<dbReference type="EnsemblPlants" id="AT4G30190.1">
    <molecule id="P19456-1"/>
    <property type="protein sequence ID" value="AT4G30190.1"/>
    <property type="gene ID" value="AT4G30190"/>
</dbReference>
<dbReference type="GeneID" id="829142"/>
<dbReference type="Gramene" id="AT4G30190.1">
    <molecule id="P19456-1"/>
    <property type="protein sequence ID" value="AT4G30190.1"/>
    <property type="gene ID" value="AT4G30190"/>
</dbReference>
<dbReference type="KEGG" id="ath:AT4G30190"/>
<dbReference type="Araport" id="AT4G30190"/>
<dbReference type="TAIR" id="AT4G30190">
    <property type="gene designation" value="HA2"/>
</dbReference>
<dbReference type="eggNOG" id="KOG0205">
    <property type="taxonomic scope" value="Eukaryota"/>
</dbReference>
<dbReference type="HOGENOM" id="CLU_002360_6_4_1"/>
<dbReference type="InParanoid" id="P19456"/>
<dbReference type="OrthoDB" id="116380at2759"/>
<dbReference type="PhylomeDB" id="P19456"/>
<dbReference type="BioCyc" id="ARA:AT4G30190-MONOMER"/>
<dbReference type="BioCyc" id="MetaCyc:AT4G30190-MONOMER"/>
<dbReference type="BRENDA" id="7.1.2.1">
    <property type="organism ID" value="399"/>
</dbReference>
<dbReference type="SABIO-RK" id="P19456"/>
<dbReference type="CD-CODE" id="4299E36E">
    <property type="entry name" value="Nucleolus"/>
</dbReference>
<dbReference type="PRO" id="PR:P19456"/>
<dbReference type="Proteomes" id="UP000006548">
    <property type="component" value="Chromosome 4"/>
</dbReference>
<dbReference type="ExpressionAtlas" id="P19456">
    <property type="expression patterns" value="baseline and differential"/>
</dbReference>
<dbReference type="GO" id="GO:0016020">
    <property type="term" value="C:membrane"/>
    <property type="evidence" value="ECO:0000314"/>
    <property type="project" value="UniProtKB"/>
</dbReference>
<dbReference type="GO" id="GO:0005886">
    <property type="term" value="C:plasma membrane"/>
    <property type="evidence" value="ECO:0007669"/>
    <property type="project" value="UniProtKB-SubCell"/>
</dbReference>
<dbReference type="GO" id="GO:0005524">
    <property type="term" value="F:ATP binding"/>
    <property type="evidence" value="ECO:0007669"/>
    <property type="project" value="UniProtKB-KW"/>
</dbReference>
<dbReference type="GO" id="GO:0016887">
    <property type="term" value="F:ATP hydrolysis activity"/>
    <property type="evidence" value="ECO:0007669"/>
    <property type="project" value="InterPro"/>
</dbReference>
<dbReference type="GO" id="GO:0000287">
    <property type="term" value="F:magnesium ion binding"/>
    <property type="evidence" value="ECO:0000314"/>
    <property type="project" value="UniProtKB"/>
</dbReference>
<dbReference type="GO" id="GO:0008553">
    <property type="term" value="F:P-type proton-exporting transporter activity"/>
    <property type="evidence" value="ECO:0000314"/>
    <property type="project" value="UniProtKB"/>
</dbReference>
<dbReference type="GO" id="GO:0120029">
    <property type="term" value="P:proton export across plasma membrane"/>
    <property type="evidence" value="ECO:0007669"/>
    <property type="project" value="InterPro"/>
</dbReference>
<dbReference type="GO" id="GO:1902600">
    <property type="term" value="P:proton transmembrane transport"/>
    <property type="evidence" value="ECO:0000314"/>
    <property type="project" value="UniProtKB"/>
</dbReference>
<dbReference type="CDD" id="cd02076">
    <property type="entry name" value="P-type_ATPase_H"/>
    <property type="match status" value="1"/>
</dbReference>
<dbReference type="FunFam" id="1.20.1110.10:FF:000045">
    <property type="entry name" value="ATPase 4 plasma membrane-type"/>
    <property type="match status" value="1"/>
</dbReference>
<dbReference type="FunFam" id="2.70.150.10:FF:000004">
    <property type="entry name" value="Plasma membrane ATPase"/>
    <property type="match status" value="1"/>
</dbReference>
<dbReference type="FunFam" id="3.40.1110.10:FF:000004">
    <property type="entry name" value="Plasma membrane ATPase"/>
    <property type="match status" value="1"/>
</dbReference>
<dbReference type="FunFam" id="3.40.50.1000:FF:000211">
    <property type="entry name" value="Plasma membrane ATPase"/>
    <property type="match status" value="1"/>
</dbReference>
<dbReference type="Gene3D" id="6.10.140.890">
    <property type="match status" value="1"/>
</dbReference>
<dbReference type="Gene3D" id="3.40.1110.10">
    <property type="entry name" value="Calcium-transporting ATPase, cytoplasmic domain N"/>
    <property type="match status" value="1"/>
</dbReference>
<dbReference type="Gene3D" id="2.70.150.10">
    <property type="entry name" value="Calcium-transporting ATPase, cytoplasmic transduction domain A"/>
    <property type="match status" value="1"/>
</dbReference>
<dbReference type="Gene3D" id="1.20.1110.10">
    <property type="entry name" value="Calcium-transporting ATPase, transmembrane domain"/>
    <property type="match status" value="1"/>
</dbReference>
<dbReference type="Gene3D" id="3.40.50.1000">
    <property type="entry name" value="HAD superfamily/HAD-like"/>
    <property type="match status" value="1"/>
</dbReference>
<dbReference type="InterPro" id="IPR004014">
    <property type="entry name" value="ATPase_P-typ_cation-transptr_N"/>
</dbReference>
<dbReference type="InterPro" id="IPR023299">
    <property type="entry name" value="ATPase_P-typ_cyto_dom_N"/>
</dbReference>
<dbReference type="InterPro" id="IPR018303">
    <property type="entry name" value="ATPase_P-typ_P_site"/>
</dbReference>
<dbReference type="InterPro" id="IPR023298">
    <property type="entry name" value="ATPase_P-typ_TM_dom_sf"/>
</dbReference>
<dbReference type="InterPro" id="IPR008250">
    <property type="entry name" value="ATPase_P-typ_transduc_dom_A_sf"/>
</dbReference>
<dbReference type="InterPro" id="IPR036412">
    <property type="entry name" value="HAD-like_sf"/>
</dbReference>
<dbReference type="InterPro" id="IPR023214">
    <property type="entry name" value="HAD_sf"/>
</dbReference>
<dbReference type="InterPro" id="IPR006534">
    <property type="entry name" value="P-type_ATPase_IIIA"/>
</dbReference>
<dbReference type="InterPro" id="IPR001757">
    <property type="entry name" value="P_typ_ATPase"/>
</dbReference>
<dbReference type="InterPro" id="IPR044492">
    <property type="entry name" value="P_typ_ATPase_HD_dom"/>
</dbReference>
<dbReference type="NCBIfam" id="TIGR01647">
    <property type="entry name" value="ATPase-IIIA_H"/>
    <property type="match status" value="1"/>
</dbReference>
<dbReference type="NCBIfam" id="TIGR01494">
    <property type="entry name" value="ATPase_P-type"/>
    <property type="match status" value="2"/>
</dbReference>
<dbReference type="PANTHER" id="PTHR42861">
    <property type="entry name" value="CALCIUM-TRANSPORTING ATPASE"/>
    <property type="match status" value="1"/>
</dbReference>
<dbReference type="Pfam" id="PF00690">
    <property type="entry name" value="Cation_ATPase_N"/>
    <property type="match status" value="1"/>
</dbReference>
<dbReference type="Pfam" id="PF00122">
    <property type="entry name" value="E1-E2_ATPase"/>
    <property type="match status" value="1"/>
</dbReference>
<dbReference type="Pfam" id="PF00702">
    <property type="entry name" value="Hydrolase"/>
    <property type="match status" value="1"/>
</dbReference>
<dbReference type="PRINTS" id="PR00119">
    <property type="entry name" value="CATATPASE"/>
</dbReference>
<dbReference type="PRINTS" id="PR00120">
    <property type="entry name" value="HATPASE"/>
</dbReference>
<dbReference type="SFLD" id="SFLDS00003">
    <property type="entry name" value="Haloacid_Dehalogenase"/>
    <property type="match status" value="1"/>
</dbReference>
<dbReference type="SFLD" id="SFLDF00027">
    <property type="entry name" value="p-type_atpase"/>
    <property type="match status" value="1"/>
</dbReference>
<dbReference type="SMART" id="SM00831">
    <property type="entry name" value="Cation_ATPase_N"/>
    <property type="match status" value="1"/>
</dbReference>
<dbReference type="SUPFAM" id="SSF81653">
    <property type="entry name" value="Calcium ATPase, transduction domain A"/>
    <property type="match status" value="1"/>
</dbReference>
<dbReference type="SUPFAM" id="SSF81665">
    <property type="entry name" value="Calcium ATPase, transmembrane domain M"/>
    <property type="match status" value="1"/>
</dbReference>
<dbReference type="SUPFAM" id="SSF56784">
    <property type="entry name" value="HAD-like"/>
    <property type="match status" value="1"/>
</dbReference>
<dbReference type="PROSITE" id="PS00154">
    <property type="entry name" value="ATPASE_E1_E2"/>
    <property type="match status" value="1"/>
</dbReference>
<sequence length="948" mass="104401">MSSLEDIKNETVDLEKIPIEEVFQQLKCSREGLTTQEGEDRIQIFGPNKLEEKKESKLLKFLGFMWNPLSWVMEMAAIMAIALANGDGRPPDWQDFVGIICLLVINSTISFIEENNAGNAAAALMAGLAPKTKVLRDGKWSEQEAAILVPGDIVSIKLGDIIPADARLLEGDPLKVDQSALTGESLPVTKHPGQEVFSGSTCKQGEIEAVVIATGVHTFFGKAAHLVDSTNQVGHFQKVLTAIGNFCICSIAIGMVIEIIVMYPIQRRKYRDGIDNLLVLLIGGIPIAMPTVLSVTMAIGSHRLSQQGAITKRMTAIEEMAGMDVLCSDKTGTLTLNKLSVDKNLVEVFCKGVEKDQVLLFAAMASRVENQDAIDAAMVGMLADPKEARAGIREVHFLPFNPVDKRTALTYIDGSGNWHRVSKGAPEQILELAKASNDLSKKVLSIIDKYAERGLRSLAVARQVVPEKTKESPGAPWEFVGLLPLFDPPRHDSAETIRRALNLGVNVKMITGDQLAIGKETGRRLGMGTNMYPSSALLGTHKDANLASIPVEELIEKADGFAGVFPEHKYEIVKKLQERKHIVGMTGDGVNDAPALKKADIGIAVADATDAARGASDIVLTEPGLSVIISAVLTSRAIFQRMKNYTIYAVSITIRIVFGFMLIALIWEFDFSAFMVLIIAILNDGTIMTISKDRVKPSPTPDSWKLKEIFATGVVLGGYQAIMTVIFFWAAHKTDFFSDTFGVRSIRDNNHELMGAVYLQVSIISQALIFVTRSRSWSFVERPGALLMIAFLIAQLIATLIAVYANWEFAKIRGIGWGWAGVIWLYSIVTYFPLDVFKFAIRYILSGKAWLNLFENKTAFTMKKDYGKEEREAQWALAQRTLHGLQPKEAVNIFPEKGSYRELSEIAEQAKRRAEIARLRELHTLKGHVESVVKLKGLDIETPSHYTV</sequence>
<evidence type="ECO:0000250" key="1"/>
<evidence type="ECO:0000255" key="2"/>
<evidence type="ECO:0000269" key="3">
    <source>
    </source>
</evidence>
<evidence type="ECO:0000269" key="4">
    <source>
    </source>
</evidence>
<evidence type="ECO:0000269" key="5">
    <source>
    </source>
</evidence>
<evidence type="ECO:0000269" key="6">
    <source>
    </source>
</evidence>
<evidence type="ECO:0000269" key="7">
    <source>
    </source>
</evidence>
<evidence type="ECO:0000269" key="8">
    <source>
    </source>
</evidence>
<evidence type="ECO:0000269" key="9">
    <source>
    </source>
</evidence>
<evidence type="ECO:0000269" key="10">
    <source>
    </source>
</evidence>
<evidence type="ECO:0000269" key="11">
    <source>
    </source>
</evidence>
<evidence type="ECO:0000269" key="12">
    <source>
    </source>
</evidence>
<evidence type="ECO:0000269" key="13">
    <source>
    </source>
</evidence>
<evidence type="ECO:0000269" key="14">
    <source>
    </source>
</evidence>
<evidence type="ECO:0000269" key="15">
    <source>
    </source>
</evidence>
<evidence type="ECO:0000269" key="16">
    <source>
    </source>
</evidence>
<evidence type="ECO:0000269" key="17">
    <source>
    </source>
</evidence>
<evidence type="ECO:0000269" key="18">
    <source>
    </source>
</evidence>
<evidence type="ECO:0000269" key="19">
    <source>
    </source>
</evidence>
<evidence type="ECO:0000269" key="20">
    <source>
    </source>
</evidence>
<evidence type="ECO:0000269" key="21">
    <source>
    </source>
</evidence>
<evidence type="ECO:0000269" key="22">
    <source>
    </source>
</evidence>
<evidence type="ECO:0000269" key="23">
    <source>
    </source>
</evidence>
<evidence type="ECO:0000269" key="24">
    <source>
    </source>
</evidence>
<evidence type="ECO:0000269" key="25">
    <source>
    </source>
</evidence>
<evidence type="ECO:0000303" key="26">
    <source>
    </source>
</evidence>
<evidence type="ECO:0000303" key="27">
    <source>
    </source>
</evidence>
<evidence type="ECO:0000303" key="28">
    <source>
    </source>
</evidence>
<evidence type="ECO:0000303" key="29">
    <source>
    </source>
</evidence>
<evidence type="ECO:0000305" key="30"/>
<evidence type="ECO:0000305" key="31">
    <source>
    </source>
</evidence>
<evidence type="ECO:0000305" key="32">
    <source>
    </source>
</evidence>
<evidence type="ECO:0000305" key="33">
    <source>
    </source>
</evidence>
<evidence type="ECO:0000312" key="34">
    <source>
        <dbReference type="Araport" id="AT4G30190"/>
    </source>
</evidence>
<evidence type="ECO:0000312" key="35">
    <source>
        <dbReference type="EMBL" id="CAB52463.1"/>
    </source>
</evidence>
<evidence type="ECO:0007744" key="36">
    <source>
    </source>
</evidence>
<evidence type="ECO:0007829" key="37">
    <source>
        <dbReference type="PDB" id="5KSD"/>
    </source>
</evidence>
<feature type="initiator methionine" description="Removed" evidence="36">
    <location>
        <position position="1"/>
    </location>
</feature>
<feature type="chain" id="PRO_0000046275" description="ATPase 2, plasma membrane-type">
    <location>
        <begin position="2"/>
        <end position="948"/>
    </location>
</feature>
<feature type="topological domain" description="Cytoplasmic" evidence="2">
    <location>
        <begin position="2"/>
        <end position="61"/>
    </location>
</feature>
<feature type="transmembrane region" description="Helical; Name=1" evidence="2">
    <location>
        <begin position="62"/>
        <end position="81"/>
    </location>
</feature>
<feature type="topological domain" description="Extracellular" evidence="2">
    <location>
        <begin position="82"/>
        <end position="93"/>
    </location>
</feature>
<feature type="transmembrane region" description="Helical; Name=2" evidence="2">
    <location>
        <begin position="94"/>
        <end position="114"/>
    </location>
</feature>
<feature type="topological domain" description="Cytoplasmic" evidence="2">
    <location>
        <begin position="115"/>
        <end position="243"/>
    </location>
</feature>
<feature type="transmembrane region" description="Helical; Name=3" evidence="2">
    <location>
        <begin position="244"/>
        <end position="264"/>
    </location>
</feature>
<feature type="topological domain" description="Extracellular" evidence="2">
    <location>
        <begin position="265"/>
        <end position="273"/>
    </location>
</feature>
<feature type="transmembrane region" description="Helical; Name=4" evidence="2">
    <location>
        <begin position="274"/>
        <end position="291"/>
    </location>
</feature>
<feature type="topological domain" description="Cytoplasmic" evidence="2">
    <location>
        <begin position="292"/>
        <end position="643"/>
    </location>
</feature>
<feature type="transmembrane region" description="Helical; Name=5" evidence="2">
    <location>
        <begin position="644"/>
        <end position="665"/>
    </location>
</feature>
<feature type="topological domain" description="Extracellular" evidence="2">
    <location>
        <begin position="666"/>
        <end position="670"/>
    </location>
</feature>
<feature type="transmembrane region" description="Helical; Name=6" evidence="2">
    <location>
        <begin position="671"/>
        <end position="693"/>
    </location>
</feature>
<feature type="topological domain" description="Cytoplasmic" evidence="2">
    <location>
        <begin position="694"/>
        <end position="709"/>
    </location>
</feature>
<feature type="transmembrane region" description="Helical; Name=7" evidence="2">
    <location>
        <begin position="710"/>
        <end position="730"/>
    </location>
</feature>
<feature type="topological domain" description="Extracellular" evidence="2">
    <location>
        <begin position="731"/>
        <end position="751"/>
    </location>
</feature>
<feature type="transmembrane region" description="Helical; Name=8" evidence="2">
    <location>
        <begin position="752"/>
        <end position="772"/>
    </location>
</feature>
<feature type="topological domain" description="Cytoplasmic" evidence="2">
    <location>
        <begin position="773"/>
        <end position="784"/>
    </location>
</feature>
<feature type="transmembrane region" description="Helical; Name=9" evidence="2">
    <location>
        <begin position="785"/>
        <end position="805"/>
    </location>
</feature>
<feature type="topological domain" description="Extracellular" evidence="2">
    <location>
        <begin position="806"/>
        <end position="813"/>
    </location>
</feature>
<feature type="transmembrane region" description="Helical; Name=10" evidence="2">
    <location>
        <begin position="814"/>
        <end position="834"/>
    </location>
</feature>
<feature type="topological domain" description="Cytoplasmic" evidence="2">
    <location>
        <begin position="835"/>
        <end position="948"/>
    </location>
</feature>
<feature type="region of interest" description="Interaction with 14-3-3 proteins">
    <location>
        <begin position="946"/>
        <end position="948"/>
    </location>
</feature>
<feature type="active site" description="4-aspartylphosphate intermediate" evidence="1">
    <location>
        <position position="329"/>
    </location>
</feature>
<feature type="binding site" evidence="1">
    <location>
        <position position="588"/>
    </location>
    <ligand>
        <name>Mg(2+)</name>
        <dbReference type="ChEBI" id="CHEBI:18420"/>
    </ligand>
</feature>
<feature type="binding site" evidence="1">
    <location>
        <position position="592"/>
    </location>
    <ligand>
        <name>Mg(2+)</name>
        <dbReference type="ChEBI" id="CHEBI:18420"/>
    </ligand>
</feature>
<feature type="modified residue" description="N-acetylserine" evidence="36">
    <location>
        <position position="2"/>
    </location>
</feature>
<feature type="modified residue" description="Phosphothreonine" evidence="18">
    <location>
        <position position="881"/>
    </location>
</feature>
<feature type="modified residue" description="Phosphoserine" evidence="15">
    <location>
        <position position="899"/>
    </location>
</feature>
<feature type="modified residue" description="Phosphoserine; by CIPK11" evidence="9">
    <location>
        <position position="931"/>
    </location>
</feature>
<feature type="modified residue" description="Phosphothreonine" evidence="4 17 24">
    <location>
        <position position="947"/>
    </location>
</feature>
<feature type="mutagenesis site" description="Reduced proton transport." evidence="14">
    <original>N</original>
    <variation>A</variation>
    <variation>D</variation>
    <variation>K</variation>
    <variation>Q</variation>
    <variation>T</variation>
    <location>
        <position position="106"/>
    </location>
</feature>
<feature type="mutagenesis site" description="No effect on ATP affinity, but reduced proton transport." evidence="6">
    <original>R</original>
    <variation>A</variation>
    <variation>D</variation>
    <location>
        <position position="655"/>
    </location>
</feature>
<feature type="mutagenesis site" description="No effect on ATP affinity and proton transport." evidence="6">
    <original>R</original>
    <variation>K</variation>
    <location>
        <position position="655"/>
    </location>
</feature>
<feature type="mutagenesis site" description="No effect on ATP affinity, but loss of proton transport." evidence="6">
    <original>D</original>
    <variation>A</variation>
    <variation>V</variation>
    <variation>R</variation>
    <location>
        <position position="684"/>
    </location>
</feature>
<feature type="mutagenesis site" description="No effect on ATP affinity, but reduced proton transport." evidence="6">
    <original>D</original>
    <variation>E</variation>
    <location>
        <position position="684"/>
    </location>
</feature>
<feature type="mutagenesis site" description="Insensitive to the inhibitor vanadate and locked in the E1 conformation. No effect on ATP hydrolysis, but loss of proton transport." evidence="5 6">
    <original>D</original>
    <variation>N</variation>
    <location>
        <position position="684"/>
    </location>
</feature>
<feature type="mutagenesis site" description="Decreased phosphorylation by PSY1R." evidence="18">
    <original>T</original>
    <variation>A</variation>
    <location>
        <position position="881"/>
    </location>
</feature>
<feature type="mutagenesis site" description="No effect on 14-3-3 protein binding, but increased activity." evidence="18">
    <original>T</original>
    <variation>D</variation>
    <location>
        <position position="881"/>
    </location>
</feature>
<feature type="mutagenesis site" description="No effect on phosphorylation." evidence="9">
    <original>S</original>
    <variation>A</variation>
    <location>
        <position position="904"/>
    </location>
</feature>
<feature type="mutagenesis site" description="Loss of activation by lysophospholipids." evidence="20">
    <original>L</original>
    <variation>A</variation>
    <location>
        <position position="919"/>
    </location>
</feature>
<feature type="mutagenesis site" description="Increased activation by lysophospholipids." evidence="20">
    <original>L</original>
    <variation>A</variation>
    <location>
        <position position="922"/>
    </location>
</feature>
<feature type="mutagenesis site" description="No effect on phosphorylation." evidence="9">
    <original>T</original>
    <variation>A</variation>
    <location>
        <position position="924"/>
    </location>
</feature>
<feature type="mutagenesis site" description="Loss of phosphorylation and increased 14-3-3 protein binding." evidence="9">
    <original>S</original>
    <variation>A</variation>
    <location>
        <position position="931"/>
    </location>
</feature>
<feature type="mutagenesis site" description="Loss of interaction with 14-3-3 protein." evidence="9">
    <original>S</original>
    <variation>D</variation>
    <location>
        <position position="931"/>
    </location>
</feature>
<feature type="mutagenesis site" description="No effect on phosphorylation." evidence="9">
    <original>T</original>
    <variation>A</variation>
    <location>
        <position position="942"/>
    </location>
</feature>
<feature type="mutagenesis site" description="No effect on phosphorylation." evidence="9">
    <original>T</original>
    <variation>A</variation>
    <location>
        <position position="947"/>
    </location>
</feature>
<feature type="helix" evidence="37">
    <location>
        <begin position="20"/>
        <end position="26"/>
    </location>
</feature>
<feature type="helix" evidence="37">
    <location>
        <begin position="36"/>
        <end position="45"/>
    </location>
</feature>
<feature type="helix" evidence="37">
    <location>
        <begin position="57"/>
        <end position="59"/>
    </location>
</feature>
<feature type="turn" evidence="37">
    <location>
        <begin position="60"/>
        <end position="62"/>
    </location>
</feature>
<feature type="helix" evidence="37">
    <location>
        <begin position="68"/>
        <end position="83"/>
    </location>
</feature>
<feature type="turn" evidence="37">
    <location>
        <begin position="84"/>
        <end position="88"/>
    </location>
</feature>
<feature type="helix" evidence="37">
    <location>
        <begin position="90"/>
        <end position="120"/>
    </location>
</feature>
<feature type="helix" evidence="37">
    <location>
        <begin position="122"/>
        <end position="128"/>
    </location>
</feature>
<feature type="strand" evidence="37">
    <location>
        <begin position="131"/>
        <end position="136"/>
    </location>
</feature>
<feature type="strand" evidence="37">
    <location>
        <begin position="139"/>
        <end position="144"/>
    </location>
</feature>
<feature type="strand" evidence="37">
    <location>
        <begin position="150"/>
        <end position="156"/>
    </location>
</feature>
<feature type="strand" evidence="37">
    <location>
        <begin position="166"/>
        <end position="172"/>
    </location>
</feature>
<feature type="strand" evidence="37">
    <location>
        <begin position="174"/>
        <end position="177"/>
    </location>
</feature>
<feature type="turn" evidence="37">
    <location>
        <begin position="179"/>
        <end position="182"/>
    </location>
</feature>
<feature type="strand" evidence="37">
    <location>
        <begin position="188"/>
        <end position="190"/>
    </location>
</feature>
<feature type="strand" evidence="37">
    <location>
        <begin position="201"/>
        <end position="204"/>
    </location>
</feature>
<feature type="strand" evidence="37">
    <location>
        <begin position="207"/>
        <end position="211"/>
    </location>
</feature>
<feature type="turn" evidence="37">
    <location>
        <begin position="215"/>
        <end position="217"/>
    </location>
</feature>
<feature type="helix" evidence="37">
    <location>
        <begin position="219"/>
        <end position="223"/>
    </location>
</feature>
<feature type="helix" evidence="37">
    <location>
        <begin position="235"/>
        <end position="254"/>
    </location>
</feature>
<feature type="turn" evidence="37">
    <location>
        <begin position="255"/>
        <end position="257"/>
    </location>
</feature>
<feature type="helix" evidence="37">
    <location>
        <begin position="258"/>
        <end position="265"/>
    </location>
</feature>
<feature type="helix" evidence="37">
    <location>
        <begin position="271"/>
        <end position="273"/>
    </location>
</feature>
<feature type="helix" evidence="37">
    <location>
        <begin position="274"/>
        <end position="284"/>
    </location>
</feature>
<feature type="helix" evidence="37">
    <location>
        <begin position="288"/>
        <end position="307"/>
    </location>
</feature>
<feature type="helix" evidence="37">
    <location>
        <begin position="316"/>
        <end position="322"/>
    </location>
</feature>
<feature type="strand" evidence="37">
    <location>
        <begin position="325"/>
        <end position="329"/>
    </location>
</feature>
<feature type="helix" evidence="37">
    <location>
        <begin position="330"/>
        <end position="334"/>
    </location>
</feature>
<feature type="helix" evidence="37">
    <location>
        <begin position="343"/>
        <end position="345"/>
    </location>
</feature>
<feature type="turn" evidence="37">
    <location>
        <begin position="355"/>
        <end position="357"/>
    </location>
</feature>
<feature type="helix" evidence="37">
    <location>
        <begin position="358"/>
        <end position="364"/>
    </location>
</feature>
<feature type="strand" evidence="37">
    <location>
        <begin position="368"/>
        <end position="370"/>
    </location>
</feature>
<feature type="helix" evidence="37">
    <location>
        <begin position="373"/>
        <end position="381"/>
    </location>
</feature>
<feature type="helix" evidence="37">
    <location>
        <begin position="385"/>
        <end position="389"/>
    </location>
</feature>
<feature type="strand" evidence="37">
    <location>
        <begin position="394"/>
        <end position="398"/>
    </location>
</feature>
<feature type="turn" evidence="37">
    <location>
        <begin position="402"/>
        <end position="404"/>
    </location>
</feature>
<feature type="strand" evidence="37">
    <location>
        <begin position="406"/>
        <end position="413"/>
    </location>
</feature>
<feature type="turn" evidence="37">
    <location>
        <begin position="414"/>
        <end position="416"/>
    </location>
</feature>
<feature type="strand" evidence="37">
    <location>
        <begin position="417"/>
        <end position="424"/>
    </location>
</feature>
<feature type="helix" evidence="37">
    <location>
        <begin position="426"/>
        <end position="429"/>
    </location>
</feature>
<feature type="turn" evidence="37">
    <location>
        <begin position="430"/>
        <end position="434"/>
    </location>
</feature>
<feature type="helix" evidence="37">
    <location>
        <begin position="437"/>
        <end position="453"/>
    </location>
</feature>
<feature type="strand" evidence="37">
    <location>
        <begin position="456"/>
        <end position="464"/>
    </location>
</feature>
<feature type="strand" evidence="37">
    <location>
        <begin position="478"/>
        <end position="486"/>
    </location>
</feature>
<feature type="helix" evidence="37">
    <location>
        <begin position="493"/>
        <end position="502"/>
    </location>
</feature>
<feature type="strand" evidence="37">
    <location>
        <begin position="506"/>
        <end position="510"/>
    </location>
</feature>
<feature type="helix" evidence="37">
    <location>
        <begin position="515"/>
        <end position="525"/>
    </location>
</feature>
<feature type="helix" evidence="37">
    <location>
        <begin position="534"/>
        <end position="537"/>
    </location>
</feature>
<feature type="strand" evidence="37">
    <location>
        <begin position="538"/>
        <end position="542"/>
    </location>
</feature>
<feature type="turn" evidence="37">
    <location>
        <begin position="546"/>
        <end position="548"/>
    </location>
</feature>
<feature type="helix" evidence="37">
    <location>
        <begin position="551"/>
        <end position="557"/>
    </location>
</feature>
<feature type="strand" evidence="37">
    <location>
        <begin position="559"/>
        <end position="563"/>
    </location>
</feature>
<feature type="helix" evidence="37">
    <location>
        <begin position="566"/>
        <end position="578"/>
    </location>
</feature>
<feature type="strand" evidence="37">
    <location>
        <begin position="583"/>
        <end position="587"/>
    </location>
</feature>
<feature type="helix" evidence="37">
    <location>
        <begin position="590"/>
        <end position="592"/>
    </location>
</feature>
<feature type="helix" evidence="37">
    <location>
        <begin position="593"/>
        <end position="598"/>
    </location>
</feature>
<feature type="strand" evidence="37">
    <location>
        <begin position="599"/>
        <end position="604"/>
    </location>
</feature>
<feature type="helix" evidence="37">
    <location>
        <begin position="610"/>
        <end position="615"/>
    </location>
</feature>
<feature type="strand" evidence="37">
    <location>
        <begin position="617"/>
        <end position="622"/>
    </location>
</feature>
<feature type="helix" evidence="37">
    <location>
        <begin position="625"/>
        <end position="667"/>
    </location>
</feature>
<feature type="helix" evidence="37">
    <location>
        <begin position="673"/>
        <end position="686"/>
    </location>
</feature>
<feature type="helix" evidence="37">
    <location>
        <begin position="687"/>
        <end position="692"/>
    </location>
</feature>
<feature type="helix" evidence="37">
    <location>
        <begin position="706"/>
        <end position="730"/>
    </location>
</feature>
<feature type="turn" evidence="37">
    <location>
        <begin position="731"/>
        <end position="733"/>
    </location>
</feature>
<feature type="helix" evidence="37">
    <location>
        <begin position="736"/>
        <end position="739"/>
    </location>
</feature>
<feature type="helix" evidence="37">
    <location>
        <begin position="750"/>
        <end position="773"/>
    </location>
</feature>
<feature type="turn" evidence="37">
    <location>
        <begin position="778"/>
        <end position="780"/>
    </location>
</feature>
<feature type="helix" evidence="37">
    <location>
        <begin position="785"/>
        <end position="804"/>
    </location>
</feature>
<feature type="turn" evidence="37">
    <location>
        <begin position="808"/>
        <end position="811"/>
    </location>
</feature>
<feature type="helix" evidence="37">
    <location>
        <begin position="817"/>
        <end position="843"/>
    </location>
</feature>
<comment type="function">
    <text evidence="7 13 16 19 21 22 23 25 31">The plasma membrane H(+) ATPase of plants and fungi generates a proton gradient that drives the active transport of nutrients by H(+)-symport (PubMed:10748244, PubMed:12920605, PubMed:27013734). The resulting external acidification and/or internal alkinization may mediate growth responses (PubMed:10748244, PubMed:12920605). Involved in maintaining the membrane potential and delta-pH, together forming the plasma membrane protonmotive force (PMF) required for root and hypocotyl elongation and root tropism (PubMed:22214817, PubMed:24492258). Important for root growth and development during different nitrogen regimes (PubMed:25382626). Forms a functional cation-translocating unit with CNGC17 that is activated by PSKR1/BAK1 and possibly other BAK1/RLK complexes (PubMed:26071421). Promotes stomatal opening in response to blue light (PubMed:28358053, PubMed:31904040).</text>
</comment>
<comment type="catalytic activity">
    <reaction evidence="30">
        <text>ATP + H2O + H(+)(in) = ADP + phosphate + 2 H(+)(out)</text>
        <dbReference type="Rhea" id="RHEA:20852"/>
        <dbReference type="ChEBI" id="CHEBI:15377"/>
        <dbReference type="ChEBI" id="CHEBI:15378"/>
        <dbReference type="ChEBI" id="CHEBI:30616"/>
        <dbReference type="ChEBI" id="CHEBI:43474"/>
        <dbReference type="ChEBI" id="CHEBI:456216"/>
        <dbReference type="EC" id="7.1.2.1"/>
    </reaction>
</comment>
<comment type="activity regulation">
    <text evidence="3 4 9 15 17 18 20 23">Regulated by an auto-inhibitory C-terminal domain that can be displaced by phosphorylation of Thr-947 and the subsequent binding of 14-3-3 proteins (PubMed:10353834). Negatively regulated by PKS5 (PubMed:17483306). PKS5 phosphorylates Ser-931, inhibiting interaction with the activating 14-3-3 protein (PubMed:17483306). Positively regulated by PSY1R (PubMed:25267325). PSY1R phosphorylates Thr-881, situated in the auto-inhibitory region I of the C-terminal domain, causing pump activation (PubMed:25267325). Negatively regulated by the secreted peptide RALF (PubMed:24458638). After specific binding to FERONIA, RALF causes phosphorylation at Ser-899, mediating the inhibition of proton transport (PubMed:24458638). Activated by lysophospholipids, without the involvement of phosphorylation of Thr-947 (PubMed:25971968). This activation is critically dependent on the single autoinhibitory residue Leu-919 (PubMed:25971968). Repressed by PP2C-D phosphatases (e.g. PP2C67/PP2C-D1 and PP2C64/PP2C-D5) which dephosphorylates Thr-947 (PubMed:24858935). Triggered by SAUR19 via phosphorylation of the C-terminal autoinhibitory domain (e.g. Thr-947), as a result of the inhibition of PP2C67/PP2C-D1 (PubMed:24858935). Phosphorylation on Thr residues is repressed by tyrphostin 9, sphingosine, GW5074 and BML-265 (PubMed:28358053). By contrast, the fungal phytotoxin fusicoccin (FC) promotes phosphorylation of Thr-947 independently to BHP, thus leading to large stomatal opening (PubMed:28358053).</text>
</comment>
<comment type="biophysicochemical properties">
    <kinetics>
        <KM evidence="20">1.2 mM for ATP</KM>
        <Vmax evidence="20">0.87 umol/min/mg enzyme</Vmax>
    </kinetics>
</comment>
<comment type="subunit">
    <text evidence="4 17 18 21 23">Binds to 14-3-3 proteins (PubMed:10593986). The binding is induced by phosphorylation of Thr-947 and it activates the H(+)-ATPase (PubMed:10593986). Interacts (via the R-domain) with PSY1R (via C-terminus) (PubMed:25267325). Part of a functional complex containing PSKR1, BAK1, CNGC17, and AHA (PubMed:26071421). Interacts with CNGC17 and PSKR1 (PubMed:26071421). Interacts with PP2C67/PP2C-D1 at the plasma membrane (PubMed:24858935). Interacts with AHA1 (PubMed:28358053).</text>
</comment>
<comment type="interaction">
    <interactant intactId="EBI-2293350">
        <id>P19456</id>
    </interactant>
    <interactant intactId="EBI-537638">
        <id>O22932</id>
        <label>CIPK11</label>
    </interactant>
    <organismsDiffer>false</organismsDiffer>
    <experiments>3</experiments>
</comment>
<comment type="subcellular location">
    <subcellularLocation>
        <location evidence="5 18 21 32">Cell membrane</location>
        <topology evidence="2">Multi-pass membrane protein</topology>
    </subcellularLocation>
</comment>
<comment type="alternative products">
    <event type="alternative splicing"/>
    <isoform>
        <id>P19456-1</id>
        <name>1</name>
        <sequence type="displayed"/>
    </isoform>
    <text>A number of isoforms are produced. According to EST sequences.</text>
</comment>
<comment type="tissue specificity">
    <text evidence="8 9 12 18">Higher levels in roots than in shoots (PubMed:2143186). Expressed in epidermal and root cortex cells, in phloem, xylem and root hairs (PubMed:17483306). Detected in cotyledons, leaves, hypocotyls, roots and root hairs (PubMed:15821287, PubMed:25267325). Expressed in guard cells and mesophyll cells (PubMed:15821287).</text>
</comment>
<comment type="developmental stage">
    <text evidence="11">Expressed on the surface of developing seeds and up to the early globular stage of embryo development.</text>
</comment>
<comment type="induction">
    <text evidence="19">Up-regulated by low nitrate conditions.</text>
</comment>
<comment type="domain">
    <text evidence="3">The C-terminus contains a R-domain composed of 2 autoinhibitory regions (863-885 and 904-919).</text>
</comment>
<comment type="PTM">
    <text evidence="26 28 29">Phosphorylated, probably by PHOT1 and PHOT2, at C-terminal Thr-947 in guard cells in response to blue light to induce stomatal opening.</text>
</comment>
<comment type="PTM">
    <text evidence="10 18">Phosphorylation at Thr-881 by PSY1R (PubMed:17651370, PubMed:25267325). This phosphorylation activates proton pumping (PubMed:25267325). Decreased phosphorylation in response to flg22 elicitation (PubMed:17651370).</text>
</comment>
<comment type="PTM">
    <text evidence="10 15">Phosphorylation at Ser-899 is specifically induced by RALF1, thus leading to the inhibition of proton transport (PubMed:24458638). Increased phosphorylation in response to flg22 elicitation (PubMed:17651370).</text>
</comment>
<comment type="PTM">
    <text evidence="4 9 10 17 24">Phosphorylation of Thr-947 induces the binding to 14-3-3 proteins, but phosphorylation of Ser-931 interferes with this binding no matter whether Thr-947 is phosphorylated or not (PubMed:10593986, PubMed:17483306). Decreased phosphorylation in response to flg22 elicitation (PubMed:17651370). Phosphorylation of Thr-947 is enhanced by the presence of brassinolide (BL) via the BRI1-BIN2 pathway and prior the trigger of hypocotyl elongation (PubMed:30649552). Inactivated by PP2C67/PP2C-D1-mediated Thr-947 dephosphorylation; SAUR19 inhibits the action of PP2C67/PP2C-D1 and thus promotes the active phosphorylated form (PubMed:24858935).</text>
</comment>
<comment type="PTM">
    <text evidence="16">Abscisic acid induces dephosphorylation of AHA2 in etiolated seedlings, suppressing ATP hydrolysis and hypocotyl elongation.</text>
</comment>
<comment type="disruption phenotype">
    <text evidence="11">No visible phenotype under normal growth conditions, due to the redudancy with AHA1. Aha1 and aha2 double mutants are embryo lethal.</text>
</comment>
<comment type="miscellaneous">
    <text evidence="31">The catalytic mechanism involves at least four different enzyme conformational states named E1, E1P, E2P, and E2, with the E1P-E2P transition accompanying the transfer of ion across the membrane. E1P and E2P are phosphorylated intermediates.</text>
</comment>
<comment type="similarity">
    <text evidence="30">Belongs to the cation transport ATPase (P-type) (TC 3.A.3) family. Type IIIA subfamily.</text>
</comment>
<protein>
    <recommendedName>
        <fullName evidence="27">ATPase 2, plasma membrane-type</fullName>
        <shortName evidence="33">PM H(+)-ATPase 2</shortName>
        <shortName evidence="33">Plasma membrane-type ATPase 2</shortName>
        <ecNumber evidence="30">7.1.2.1</ecNumber>
    </recommendedName>
    <alternativeName>
        <fullName>Proton pump 2</fullName>
    </alternativeName>
</protein>
<reference key="1">
    <citation type="journal article" date="1990" name="J. Biol. Chem.">
        <title>The Arabidopsis thaliana plasma membrane H(+)-ATPase multigene family. Genomic sequence and expression of a third isoform.</title>
        <authorList>
            <person name="Harper J.F."/>
            <person name="Manney L."/>
            <person name="Dewitt N.D."/>
            <person name="Yoo M.H."/>
            <person name="Sussman M.R."/>
        </authorList>
    </citation>
    <scope>NUCLEOTIDE SEQUENCE [GENOMIC DNA]</scope>
    <source>
        <strain>cv. Columbia</strain>
    </source>
</reference>
<reference key="2">
    <citation type="journal article" date="1990" name="J. Biol. Chem.">
        <authorList>
            <person name="Harper J.F."/>
            <person name="Manney L."/>
            <person name="Dewitt N.D."/>
            <person name="Yoo M.H."/>
            <person name="Sussman M.R."/>
        </authorList>
    </citation>
    <scope>ERRATUM OF PUBMED:2143186</scope>
</reference>
<reference key="3">
    <citation type="journal article" date="1999" name="Nature">
        <title>Sequence and analysis of chromosome 4 of the plant Arabidopsis thaliana.</title>
        <authorList>
            <person name="Mayer K.F.X."/>
            <person name="Schueller C."/>
            <person name="Wambutt R."/>
            <person name="Murphy G."/>
            <person name="Volckaert G."/>
            <person name="Pohl T."/>
            <person name="Duesterhoeft A."/>
            <person name="Stiekema W."/>
            <person name="Entian K.-D."/>
            <person name="Terryn N."/>
            <person name="Harris B."/>
            <person name="Ansorge W."/>
            <person name="Brandt P."/>
            <person name="Grivell L.A."/>
            <person name="Rieger M."/>
            <person name="Weichselgartner M."/>
            <person name="de Simone V."/>
            <person name="Obermaier B."/>
            <person name="Mache R."/>
            <person name="Mueller M."/>
            <person name="Kreis M."/>
            <person name="Delseny M."/>
            <person name="Puigdomenech P."/>
            <person name="Watson M."/>
            <person name="Schmidtheini T."/>
            <person name="Reichert B."/>
            <person name="Portetelle D."/>
            <person name="Perez-Alonso M."/>
            <person name="Boutry M."/>
            <person name="Bancroft I."/>
            <person name="Vos P."/>
            <person name="Hoheisel J."/>
            <person name="Zimmermann W."/>
            <person name="Wedler H."/>
            <person name="Ridley P."/>
            <person name="Langham S.-A."/>
            <person name="McCullagh B."/>
            <person name="Bilham L."/>
            <person name="Robben J."/>
            <person name="van der Schueren J."/>
            <person name="Grymonprez B."/>
            <person name="Chuang Y.-J."/>
            <person name="Vandenbussche F."/>
            <person name="Braeken M."/>
            <person name="Weltjens I."/>
            <person name="Voet M."/>
            <person name="Bastiaens I."/>
            <person name="Aert R."/>
            <person name="Defoor E."/>
            <person name="Weitzenegger T."/>
            <person name="Bothe G."/>
            <person name="Ramsperger U."/>
            <person name="Hilbert H."/>
            <person name="Braun M."/>
            <person name="Holzer E."/>
            <person name="Brandt A."/>
            <person name="Peters S."/>
            <person name="van Staveren M."/>
            <person name="Dirkse W."/>
            <person name="Mooijman P."/>
            <person name="Klein Lankhorst R."/>
            <person name="Rose M."/>
            <person name="Hauf J."/>
            <person name="Koetter P."/>
            <person name="Berneiser S."/>
            <person name="Hempel S."/>
            <person name="Feldpausch M."/>
            <person name="Lamberth S."/>
            <person name="Van den Daele H."/>
            <person name="De Keyser A."/>
            <person name="Buysshaert C."/>
            <person name="Gielen J."/>
            <person name="Villarroel R."/>
            <person name="De Clercq R."/>
            <person name="van Montagu M."/>
            <person name="Rogers J."/>
            <person name="Cronin A."/>
            <person name="Quail M.A."/>
            <person name="Bray-Allen S."/>
            <person name="Clark L."/>
            <person name="Doggett J."/>
            <person name="Hall S."/>
            <person name="Kay M."/>
            <person name="Lennard N."/>
            <person name="McLay K."/>
            <person name="Mayes R."/>
            <person name="Pettett A."/>
            <person name="Rajandream M.A."/>
            <person name="Lyne M."/>
            <person name="Benes V."/>
            <person name="Rechmann S."/>
            <person name="Borkova D."/>
            <person name="Bloecker H."/>
            <person name="Scharfe M."/>
            <person name="Grimm M."/>
            <person name="Loehnert T.-H."/>
            <person name="Dose S."/>
            <person name="de Haan M."/>
            <person name="Maarse A.C."/>
            <person name="Schaefer M."/>
            <person name="Mueller-Auer S."/>
            <person name="Gabel C."/>
            <person name="Fuchs M."/>
            <person name="Fartmann B."/>
            <person name="Granderath K."/>
            <person name="Dauner D."/>
            <person name="Herzl A."/>
            <person name="Neumann S."/>
            <person name="Argiriou A."/>
            <person name="Vitale D."/>
            <person name="Liguori R."/>
            <person name="Piravandi E."/>
            <person name="Massenet O."/>
            <person name="Quigley F."/>
            <person name="Clabauld G."/>
            <person name="Muendlein A."/>
            <person name="Felber R."/>
            <person name="Schnabl S."/>
            <person name="Hiller R."/>
            <person name="Schmidt W."/>
            <person name="Lecharny A."/>
            <person name="Aubourg S."/>
            <person name="Chefdor F."/>
            <person name="Cooke R."/>
            <person name="Berger C."/>
            <person name="Monfort A."/>
            <person name="Casacuberta E."/>
            <person name="Gibbons T."/>
            <person name="Weber N."/>
            <person name="Vandenbol M."/>
            <person name="Bargues M."/>
            <person name="Terol J."/>
            <person name="Torres A."/>
            <person name="Perez-Perez A."/>
            <person name="Purnelle B."/>
            <person name="Bent E."/>
            <person name="Johnson S."/>
            <person name="Tacon D."/>
            <person name="Jesse T."/>
            <person name="Heijnen L."/>
            <person name="Schwarz S."/>
            <person name="Scholler P."/>
            <person name="Heber S."/>
            <person name="Francs P."/>
            <person name="Bielke C."/>
            <person name="Frishman D."/>
            <person name="Haase D."/>
            <person name="Lemcke K."/>
            <person name="Mewes H.-W."/>
            <person name="Stocker S."/>
            <person name="Zaccaria P."/>
            <person name="Bevan M."/>
            <person name="Wilson R.K."/>
            <person name="de la Bastide M."/>
            <person name="Habermann K."/>
            <person name="Parnell L."/>
            <person name="Dedhia N."/>
            <person name="Gnoj L."/>
            <person name="Schutz K."/>
            <person name="Huang E."/>
            <person name="Spiegel L."/>
            <person name="Sekhon M."/>
            <person name="Murray J."/>
            <person name="Sheet P."/>
            <person name="Cordes M."/>
            <person name="Abu-Threideh J."/>
            <person name="Stoneking T."/>
            <person name="Kalicki J."/>
            <person name="Graves T."/>
            <person name="Harmon G."/>
            <person name="Edwards J."/>
            <person name="Latreille P."/>
            <person name="Courtney L."/>
            <person name="Cloud J."/>
            <person name="Abbott A."/>
            <person name="Scott K."/>
            <person name="Johnson D."/>
            <person name="Minx P."/>
            <person name="Bentley D."/>
            <person name="Fulton B."/>
            <person name="Miller N."/>
            <person name="Greco T."/>
            <person name="Kemp K."/>
            <person name="Kramer J."/>
            <person name="Fulton L."/>
            <person name="Mardis E."/>
            <person name="Dante M."/>
            <person name="Pepin K."/>
            <person name="Hillier L.W."/>
            <person name="Nelson J."/>
            <person name="Spieth J."/>
            <person name="Ryan E."/>
            <person name="Andrews S."/>
            <person name="Geisel C."/>
            <person name="Layman D."/>
            <person name="Du H."/>
            <person name="Ali J."/>
            <person name="Berghoff A."/>
            <person name="Jones K."/>
            <person name="Drone K."/>
            <person name="Cotton M."/>
            <person name="Joshu C."/>
            <person name="Antonoiu B."/>
            <person name="Zidanic M."/>
            <person name="Strong C."/>
            <person name="Sun H."/>
            <person name="Lamar B."/>
            <person name="Yordan C."/>
            <person name="Ma P."/>
            <person name="Zhong J."/>
            <person name="Preston R."/>
            <person name="Vil D."/>
            <person name="Shekher M."/>
            <person name="Matero A."/>
            <person name="Shah R."/>
            <person name="Swaby I.K."/>
            <person name="O'Shaughnessy A."/>
            <person name="Rodriguez M."/>
            <person name="Hoffman J."/>
            <person name="Till S."/>
            <person name="Granat S."/>
            <person name="Shohdy N."/>
            <person name="Hasegawa A."/>
            <person name="Hameed A."/>
            <person name="Lodhi M."/>
            <person name="Johnson A."/>
            <person name="Chen E."/>
            <person name="Marra M.A."/>
            <person name="Martienssen R."/>
            <person name="McCombie W.R."/>
        </authorList>
    </citation>
    <scope>NUCLEOTIDE SEQUENCE [LARGE SCALE GENOMIC DNA]</scope>
    <source>
        <strain>cv. Columbia</strain>
    </source>
</reference>
<reference key="4">
    <citation type="journal article" date="2017" name="Plant J.">
        <title>Araport11: a complete reannotation of the Arabidopsis thaliana reference genome.</title>
        <authorList>
            <person name="Cheng C.Y."/>
            <person name="Krishnakumar V."/>
            <person name="Chan A.P."/>
            <person name="Thibaud-Nissen F."/>
            <person name="Schobel S."/>
            <person name="Town C.D."/>
        </authorList>
    </citation>
    <scope>GENOME REANNOTATION</scope>
    <source>
        <strain>cv. Columbia</strain>
    </source>
</reference>
<reference key="5">
    <citation type="journal article" date="2003" name="Science">
        <title>Empirical analysis of transcriptional activity in the Arabidopsis genome.</title>
        <authorList>
            <person name="Yamada K."/>
            <person name="Lim J."/>
            <person name="Dale J.M."/>
            <person name="Chen H."/>
            <person name="Shinn P."/>
            <person name="Palm C.J."/>
            <person name="Southwick A.M."/>
            <person name="Wu H.C."/>
            <person name="Kim C.J."/>
            <person name="Nguyen M."/>
            <person name="Pham P.K."/>
            <person name="Cheuk R.F."/>
            <person name="Karlin-Newmann G."/>
            <person name="Liu S.X."/>
            <person name="Lam B."/>
            <person name="Sakano H."/>
            <person name="Wu T."/>
            <person name="Yu G."/>
            <person name="Miranda M."/>
            <person name="Quach H.L."/>
            <person name="Tripp M."/>
            <person name="Chang C.H."/>
            <person name="Lee J.M."/>
            <person name="Toriumi M.J."/>
            <person name="Chan M.M."/>
            <person name="Tang C.C."/>
            <person name="Onodera C.S."/>
            <person name="Deng J.M."/>
            <person name="Akiyama K."/>
            <person name="Ansari Y."/>
            <person name="Arakawa T."/>
            <person name="Banh J."/>
            <person name="Banno F."/>
            <person name="Bowser L."/>
            <person name="Brooks S.Y."/>
            <person name="Carninci P."/>
            <person name="Chao Q."/>
            <person name="Choy N."/>
            <person name="Enju A."/>
            <person name="Goldsmith A.D."/>
            <person name="Gurjal M."/>
            <person name="Hansen N.F."/>
            <person name="Hayashizaki Y."/>
            <person name="Johnson-Hopson C."/>
            <person name="Hsuan V.W."/>
            <person name="Iida K."/>
            <person name="Karnes M."/>
            <person name="Khan S."/>
            <person name="Koesema E."/>
            <person name="Ishida J."/>
            <person name="Jiang P.X."/>
            <person name="Jones T."/>
            <person name="Kawai J."/>
            <person name="Kamiya A."/>
            <person name="Meyers C."/>
            <person name="Nakajima M."/>
            <person name="Narusaka M."/>
            <person name="Seki M."/>
            <person name="Sakurai T."/>
            <person name="Satou M."/>
            <person name="Tamse R."/>
            <person name="Vaysberg M."/>
            <person name="Wallender E.K."/>
            <person name="Wong C."/>
            <person name="Yamamura Y."/>
            <person name="Yuan S."/>
            <person name="Shinozaki K."/>
            <person name="Davis R.W."/>
            <person name="Theologis A."/>
            <person name="Ecker J.R."/>
        </authorList>
    </citation>
    <scope>NUCLEOTIDE SEQUENCE [LARGE SCALE MRNA]</scope>
    <source>
        <strain>cv. Columbia</strain>
    </source>
</reference>
<reference key="6">
    <citation type="journal article" date="1999" name="Biochemistry">
        <title>Molecular dissection of the C-terminal regulatory domain of the plant plasma membrane H+-ATPase AHA2: mapping of residues that when altered give rise to an activated enzyme.</title>
        <authorList>
            <person name="Axelsen K.B."/>
            <person name="Venema K."/>
            <person name="Jahn T."/>
            <person name="Baunsgaard L."/>
            <person name="Palmgren M.G."/>
        </authorList>
    </citation>
    <scope>DOMAIN</scope>
    <scope>ACTIVITY REGULATION</scope>
</reference>
<reference key="7">
    <citation type="journal article" date="1999" name="J. Biol. Chem.">
        <title>Binding of 14-3-3 protein to the plasma membrane H(+)-ATPase AHA2 involves the three C-terminal residues Tyr(946)-Thr-Val and requires phosphorylation of Thr(947).</title>
        <authorList>
            <person name="Fuglsang A.T."/>
            <person name="Visconti S."/>
            <person name="Drumm K."/>
            <person name="Jahn T."/>
            <person name="Stensballe A."/>
            <person name="Mattei B."/>
            <person name="Jensen O.N."/>
            <person name="Aducci P."/>
            <person name="Palmgren M.G."/>
        </authorList>
    </citation>
    <scope>PHOSPHORYLATION AT THR-947</scope>
    <scope>INTERACTION WITH 14-3-3 PROTEINS</scope>
</reference>
<reference key="8">
    <citation type="journal article" date="2000" name="J. Biol. Chem.">
        <title>Abolishment of proton pumping and accumulation in the E1P conformational state of a plant plasma membrane H+-ATPase by substitution of a conserved aspartyl residue in transmembrane segment 6.</title>
        <authorList>
            <person name="Buch-Pedersen M.J."/>
            <person name="Venema K."/>
            <person name="Serrano R."/>
            <person name="Palmgren M.G."/>
        </authorList>
    </citation>
    <scope>MUTAGENESIS OF ASP-684</scope>
    <scope>SUBCELLULAR LOCATION</scope>
</reference>
<reference key="9">
    <citation type="journal article" date="2000" name="Biochim. Biophys. Acta">
        <title>The plant plasma membrane H(+)-ATPase: structure, function and regulation.</title>
        <authorList>
            <person name="Morsomme P."/>
            <person name="Boutry M."/>
        </authorList>
    </citation>
    <scope>REVIEW</scope>
</reference>
<reference key="10">
    <citation type="journal article" date="2003" name="J. Biol. Chem.">
        <title>Conserved Asp684 in transmembrane segment M6 of the plant plasma membrane P-type proton pump AHA2 is a molecular determinant of proton translocation.</title>
        <authorList>
            <person name="Buch-Pedersen M.J."/>
            <person name="Palmgren M.G."/>
        </authorList>
    </citation>
    <scope>MUTAGENESIS OF ARG-655 AND ASP-684</scope>
    <scope>PHOSPHORYLATION</scope>
</reference>
<reference key="11">
    <citation type="journal article" date="2003" name="J. Plant Res.">
        <title>Mechanism of proton transport by plant plasma membrane proton ATPases.</title>
        <authorList>
            <person name="Buch-Pedersen M.J."/>
            <person name="Palmgren M.G."/>
        </authorList>
    </citation>
    <scope>FUNCTION</scope>
</reference>
<reference key="12">
    <citation type="journal article" date="2004" name="Plant Cell">
        <title>Phosphoproteomics of the Arabidopsis plasma membrane and a new phosphorylation site database.</title>
        <authorList>
            <person name="Nuehse T.S."/>
            <person name="Stensballe A."/>
            <person name="Jensen O.N."/>
            <person name="Peck S.C."/>
        </authorList>
    </citation>
    <scope>SUBCELLULAR LOCATION</scope>
    <scope>IDENTIFICATION BY MASS SPECTROMETRY [LARGE SCALE ANALYSIS]</scope>
</reference>
<reference key="13">
    <citation type="journal article" date="2005" name="Plant Cell Physiol.">
        <title>Biochemical characterization of plasma membrane H+-ATPase activation in guard cell protoplasts of Arabidopsis thaliana in response to blue light.</title>
        <authorList>
            <person name="Ueno K."/>
            <person name="Kinoshita T."/>
            <person name="Inoue S."/>
            <person name="Emi T."/>
            <person name="Shimazaki K."/>
        </authorList>
    </citation>
    <scope>PHOSPHORYLATION BY PHOT1 AND PHOT2 AT THR-947</scope>
    <scope>TISSUE SPECIFICITY</scope>
    <source>
        <strain>cv. Columbia GL1</strain>
    </source>
</reference>
<reference key="14">
    <citation type="journal article" date="2007" name="Mol. Cell. Proteomics">
        <title>Temporal analysis of sucrose-induced phosphorylation changes in plasma membrane proteins of Arabidopsis.</title>
        <authorList>
            <person name="Niittylae T."/>
            <person name="Fuglsang A.T."/>
            <person name="Palmgren M.G."/>
            <person name="Frommer W.B."/>
            <person name="Schulze W.X."/>
        </authorList>
    </citation>
    <scope>IDENTIFICATION BY MASS SPECTROMETRY [LARGE SCALE ANALYSIS]</scope>
    <source>
        <tissue>Seedling</tissue>
    </source>
</reference>
<reference key="15">
    <citation type="journal article" date="2007" name="Plant Cell">
        <title>Arabidopsis protein kinase PKS5 inhibits the plasma membrane H+ -ATPase by preventing interaction with 14-3-3 protein.</title>
        <authorList>
            <person name="Fuglsang A.T."/>
            <person name="Guo Y."/>
            <person name="Cuin T.A."/>
            <person name="Qiu Q."/>
            <person name="Song C."/>
            <person name="Kristiansen K.A."/>
            <person name="Bych K."/>
            <person name="Schulz A."/>
            <person name="Shabala S."/>
            <person name="Schumaker K.S."/>
            <person name="Palmgren M.G."/>
            <person name="Zhu J.K."/>
        </authorList>
    </citation>
    <scope>PHOSPHORYLATION AT SER-931</scope>
    <scope>MUTAGENESIS OF SER-904; THR-924; SER-931; THR-942 AND THR-947</scope>
    <scope>TISSUE SPECIFICITY</scope>
    <scope>ACTIVITY REGULATION</scope>
</reference>
<reference key="16">
    <citation type="journal article" date="2007" name="Plant J.">
        <title>Quantitative phosphoproteomic analysis of plasma membrane proteins reveals regulatory mechanisms of plant innate immune responses.</title>
        <authorList>
            <person name="Nuehse T.S."/>
            <person name="Bottrill A.R."/>
            <person name="Jones A.M."/>
            <person name="Peck S.C."/>
        </authorList>
    </citation>
    <scope>PHOSPHORYLATION AT THR-881; SER-899 AND THR-947</scope>
</reference>
<reference key="17">
    <citation type="journal article" date="2009" name="J. Proteomics">
        <title>Phosphoproteomic analysis of nuclei-enriched fractions from Arabidopsis thaliana.</title>
        <authorList>
            <person name="Jones A.M.E."/>
            <person name="MacLean D."/>
            <person name="Studholme D.J."/>
            <person name="Serna-Sanz A."/>
            <person name="Andreasson E."/>
            <person name="Rathjen J.P."/>
            <person name="Peck S.C."/>
        </authorList>
    </citation>
    <scope>IDENTIFICATION BY MASS SPECTROMETRY [LARGE SCALE ANALYSIS]</scope>
    <source>
        <strain>cv. Columbia</strain>
    </source>
</reference>
<reference key="18">
    <citation type="journal article" date="2009" name="Plant Physiol.">
        <title>Large-scale Arabidopsis phosphoproteome profiling reveals novel chloroplast kinase substrates and phosphorylation networks.</title>
        <authorList>
            <person name="Reiland S."/>
            <person name="Messerli G."/>
            <person name="Baerenfaller K."/>
            <person name="Gerrits B."/>
            <person name="Endler A."/>
            <person name="Grossmann J."/>
            <person name="Gruissem W."/>
            <person name="Baginsky S."/>
        </authorList>
    </citation>
    <scope>IDENTIFICATION BY MASS SPECTROMETRY [LARGE SCALE ANALYSIS]</scope>
</reference>
<reference key="19">
    <citation type="journal article" date="2010" name="J. Biol. Chem.">
        <title>Molecular characterization of mutant Arabidopsis plants with reduced plasma membrane proton pump activity.</title>
        <authorList>
            <person name="Haruta M."/>
            <person name="Burch H.L."/>
            <person name="Nelson R.B."/>
            <person name="Barrett-Wilt G."/>
            <person name="Kline K.G."/>
            <person name="Mohsin S.B."/>
            <person name="Young J.C."/>
            <person name="Otegui M.S."/>
            <person name="Sussman M.R."/>
        </authorList>
    </citation>
    <scope>DISRUPTION PHENOTYPE</scope>
    <scope>DEVELOPMENTAL STAGE</scope>
</reference>
<reference key="20">
    <citation type="journal article" date="2012" name="Mol. Cell. Proteomics">
        <title>Comparative large-scale characterisation of plant vs. mammal proteins reveals similar and idiosyncratic N-alpha acetylation features.</title>
        <authorList>
            <person name="Bienvenut W.V."/>
            <person name="Sumpton D."/>
            <person name="Martinez A."/>
            <person name="Lilla S."/>
            <person name="Espagne C."/>
            <person name="Meinnel T."/>
            <person name="Giglione C."/>
        </authorList>
    </citation>
    <scope>ACETYLATION [LARGE SCALE ANALYSIS] AT SER-2</scope>
    <scope>CLEAVAGE OF INITIATOR METHIONINE [LARGE SCALE ANALYSIS]</scope>
    <scope>IDENTIFICATION BY MASS SPECTROMETRY [LARGE SCALE ANALYSIS]</scope>
</reference>
<reference key="21">
    <citation type="journal article" date="2012" name="Plant Physiol.">
        <title>The effect of a genetically reduced plasma membrane protonmotive force on vegetative growth of Arabidopsis.</title>
        <authorList>
            <person name="Haruta M."/>
            <person name="Sussman M.R."/>
        </authorList>
    </citation>
    <scope>FUNCTION</scope>
</reference>
<reference key="22">
    <citation type="journal article" date="2013" name="J. Biol. Chem.">
        <title>A conserved asparagine in a P-type proton pump is required for efficient gating of protons.</title>
        <authorList>
            <person name="Ekberg K."/>
            <person name="Wielandt A.G."/>
            <person name="Buch-Pedersen M.J."/>
            <person name="Palmgren M.G."/>
        </authorList>
    </citation>
    <scope>MUTAGENESIS OF ASN-106</scope>
</reference>
<reference key="23">
    <citation type="journal article" date="2014" name="Plant Cell">
        <title>SAUR inhibition of PP2C-D phosphatases activates plasma membrane H+-ATPases to promote cell expansion in Arabidopsis.</title>
        <authorList>
            <person name="Spartz A.K."/>
            <person name="Ren H."/>
            <person name="Park M.Y."/>
            <person name="Grandt K.N."/>
            <person name="Lee S.H."/>
            <person name="Murphy A.S."/>
            <person name="Sussman M.R."/>
            <person name="Overvoorde P.J."/>
            <person name="Gray W.M."/>
        </authorList>
    </citation>
    <scope>ACTIVITY REGULATION</scope>
    <scope>INTERACTION WITH PP2C67/PP2C-D1</scope>
    <scope>PHOSPHORYLATION AT THR-947</scope>
    <source>
        <strain>cv. Columbia</strain>
    </source>
</reference>
<reference key="24">
    <citation type="journal article" date="2014" name="Plant Cell Physiol.">
        <title>Abscisic acid suppresses hypocotyl elongation by dephosphorylating plasma membrane H(+)-ATPase in Arabidopsis thaliana.</title>
        <authorList>
            <person name="Hayashi Y."/>
            <person name="Takahashi K."/>
            <person name="Inoue S."/>
            <person name="Kinoshita T."/>
        </authorList>
    </citation>
    <scope>FUNCTION</scope>
    <scope>PHOSPHORYLATION</scope>
</reference>
<reference key="25">
    <citation type="journal article" date="2014" name="Plant J.">
        <title>Receptor kinase-mediated control of primary active proton pumping at the plasma membrane.</title>
        <authorList>
            <person name="Fuglsang A.T."/>
            <person name="Kristensen A."/>
            <person name="Cuin T.A."/>
            <person name="Schulze W.X."/>
            <person name="Persson J."/>
            <person name="Thuesen K.H."/>
            <person name="Ytting C.K."/>
            <person name="Oehlenschlaeger C.B."/>
            <person name="Mahmood K."/>
            <person name="Sondergaard T.E."/>
            <person name="Shabala S."/>
            <person name="Palmgren M.G."/>
        </authorList>
    </citation>
    <scope>INTERACTION WITH PSY1R</scope>
    <scope>PHOSPHORYLATION AT THR-881</scope>
    <scope>SUBCELLULAR LOCATION</scope>
    <scope>TISSUE SPECIFICITY</scope>
    <scope>MUTAGENESIS OF THR-881</scope>
    <scope>ACTIVITY REGULATION</scope>
</reference>
<reference key="26">
    <citation type="journal article" date="2014" name="Science">
        <title>A peptide hormone and its receptor protein kinase regulate plant cell expansion.</title>
        <authorList>
            <person name="Haruta M."/>
            <person name="Sabat G."/>
            <person name="Stecker K."/>
            <person name="Minkoff B.B."/>
            <person name="Sussman M.R."/>
        </authorList>
    </citation>
    <scope>PHOSPHORYLATION AT SER-899</scope>
    <scope>ACTIVITY REGULATION</scope>
    <source>
        <strain>cv. Columbia</strain>
    </source>
</reference>
<reference key="27">
    <citation type="journal article" date="2015" name="J. Biol. Chem.">
        <title>Specific Activation of the Plant P-type Plasma Membrane H+-ATPase by Lysophospholipids Depends on the Autoinhibitory N- and C-terminal Domains.</title>
        <authorList>
            <person name="Wielandt A.G."/>
            <person name="Pedersen J.T."/>
            <person name="Falhof J."/>
            <person name="Kemmer G.C."/>
            <person name="Lund A."/>
            <person name="Ekberg K."/>
            <person name="Fuglsang A.T."/>
            <person name="Pomorski T.G."/>
            <person name="Buch-Pedersen M.J."/>
            <person name="Palmgren M."/>
        </authorList>
    </citation>
    <scope>ACTIVITY REGULATION</scope>
    <scope>BIOPHYSICOCHEMICAL PROPERTIES</scope>
    <scope>MUTAGENESIS OF LEU-919 AND LEU-922</scope>
</reference>
<reference key="28">
    <citation type="journal article" date="2015" name="Physiol. Plantarum">
        <title>The plasma membrane H(+)-ATPase AHA2 contributes to the root architecture in response to different nitrogen supply.</title>
        <authorList>
            <person name="Mlodzinska E."/>
            <person name="Klobus G."/>
            <person name="Christensen M.D."/>
            <person name="Fuglsang A.T."/>
        </authorList>
    </citation>
    <scope>FUNCTION</scope>
    <scope>INDUCTION BY NITRATE</scope>
</reference>
<reference key="29">
    <citation type="journal article" date="2015" name="Plant Cell">
        <title>Phytosulfokine regulates growth in Arabidopsis through a response module at the plasma membrane that includes CYCLIC NUCLEOTIDE-GATED CHANNEL17, H+-ATPase, and BAK1.</title>
        <authorList>
            <person name="Ladwig F."/>
            <person name="Dahlke R.I."/>
            <person name="Stuehrwohldt N."/>
            <person name="Hartmann J."/>
            <person name="Harter K."/>
            <person name="Sauter M."/>
        </authorList>
    </citation>
    <scope>FUNCTION</scope>
    <scope>INTERACTION WITH CNGC17 AND PSKR1</scope>
    <scope>SUBCELLULAR LOCATION</scope>
</reference>
<reference key="30">
    <citation type="journal article" date="2016" name="Science">
        <title>Direct observation of proton pumping by a eukaryotic P-type ATPase.</title>
        <authorList>
            <person name="Veshaguri S."/>
            <person name="Christensen S.M."/>
            <person name="Kemmer G.C."/>
            <person name="Ghale G."/>
            <person name="Moeller M.P."/>
            <person name="Lohr C."/>
            <person name="Christensen A.L."/>
            <person name="Justesen B.H."/>
            <person name="Joergensen I.L."/>
            <person name="Schiller J."/>
            <person name="Hatzakis N.S."/>
            <person name="Grabe M."/>
            <person name="Pomorski T.G."/>
            <person name="Stamou D."/>
        </authorList>
    </citation>
    <scope>FUNCTION</scope>
</reference>
<reference key="31">
    <citation type="journal article" date="2017" name="Sci. Rep.">
        <title>A Raf-like protein kinase BHP mediates blue light-dependent stomatal opening.</title>
        <authorList>
            <person name="Hayashi M."/>
            <person name="Inoue S.-I."/>
            <person name="Ueno Y."/>
            <person name="Kinoshita T."/>
        </authorList>
    </citation>
    <scope>FUNCTION</scope>
    <scope>PHOSPHORYLATION</scope>
    <scope>ACTIVITY REGULATION</scope>
    <scope>INTERACTION WITH AHA1</scope>
    <source>
        <strain>cv. Columbia</strain>
    </source>
</reference>
<reference key="32">
    <citation type="journal article" date="2019" name="Plant Cell Physiol.">
        <title>Brassinosteroid induces phosphorylation of the plasma membrane H+-ATPase during hypocotyl elongation in Arabidopsis thaliana.</title>
        <authorList>
            <person name="Minami A."/>
            <person name="Takahashi K."/>
            <person name="Inoue S.I."/>
            <person name="Tada Y."/>
            <person name="Kinoshita T."/>
        </authorList>
    </citation>
    <scope>PHOSPHORYLATION AT THR-947</scope>
    <source>
        <strain>cv. Columbia</strain>
    </source>
</reference>
<reference key="33">
    <citation type="journal article" date="2020" name="Photochem. Photobiol. Sci.">
        <title>Raf-like kinases CBC1 and CBC2 negatively regulate stomatal opening by negatively regulating plasma membrane H+-ATPase phosphorylation in Arabidopsis.</title>
        <authorList>
            <person name="Hayashi M."/>
            <person name="Sugimoto H."/>
            <person name="Takahashi H."/>
            <person name="Seki M."/>
            <person name="Shinozaki K."/>
            <person name="Sawasaki T."/>
            <person name="Kinoshita T."/>
            <person name="Inoue S.-I."/>
        </authorList>
    </citation>
    <scope>FUNCTION</scope>
    <scope>PHOSPHORYLATION BY PHOT1 AND PHOT2 AT THR-947</scope>
    <source>
        <strain>cv. Columbia</strain>
    </source>
</reference>
<reference key="34">
    <citation type="journal article" date="2007" name="Nature">
        <title>Crystal structure of the plasma membrane proton pump.</title>
        <authorList>
            <person name="Pedersen B.P."/>
            <person name="Buch-Pedersen M.J."/>
            <person name="Morth J.P."/>
            <person name="Palmgren M.G."/>
            <person name="Nissen P."/>
        </authorList>
    </citation>
    <scope>X-RAY CRYSTALLOGRAPHY (3.60 ANGSTROMS) OF 1-875</scope>
</reference>
<name>PMA2_ARATH</name>
<accession>P19456</accession>
<keyword id="KW-0002">3D-structure</keyword>
<keyword id="KW-0007">Acetylation</keyword>
<keyword id="KW-0025">Alternative splicing</keyword>
<keyword id="KW-0067">ATP-binding</keyword>
<keyword id="KW-1003">Cell membrane</keyword>
<keyword id="KW-0375">Hydrogen ion transport</keyword>
<keyword id="KW-0406">Ion transport</keyword>
<keyword id="KW-0460">Magnesium</keyword>
<keyword id="KW-0472">Membrane</keyword>
<keyword id="KW-0479">Metal-binding</keyword>
<keyword id="KW-0547">Nucleotide-binding</keyword>
<keyword id="KW-0597">Phosphoprotein</keyword>
<keyword id="KW-1185">Reference proteome</keyword>
<keyword id="KW-1278">Translocase</keyword>
<keyword id="KW-0812">Transmembrane</keyword>
<keyword id="KW-1133">Transmembrane helix</keyword>
<keyword id="KW-0813">Transport</keyword>